<accession>C3TS06</accession>
<keyword id="KW-1015">Disulfide bond</keyword>
<keyword id="KW-0872">Ion channel impairing toxin</keyword>
<keyword id="KW-0166">Nematocyst</keyword>
<keyword id="KW-0528">Neurotoxin</keyword>
<keyword id="KW-0964">Secreted</keyword>
<keyword id="KW-0732">Signal</keyword>
<keyword id="KW-0800">Toxin</keyword>
<keyword id="KW-0738">Voltage-gated sodium channel impairing toxin</keyword>
<dbReference type="EMBL" id="EU919729">
    <property type="protein sequence ID" value="ACL12304.1"/>
    <property type="molecule type" value="Genomic_DNA"/>
</dbReference>
<dbReference type="GO" id="GO:0005576">
    <property type="term" value="C:extracellular region"/>
    <property type="evidence" value="ECO:0007669"/>
    <property type="project" value="UniProtKB-SubCell"/>
</dbReference>
<dbReference type="GO" id="GO:0042151">
    <property type="term" value="C:nematocyst"/>
    <property type="evidence" value="ECO:0007669"/>
    <property type="project" value="UniProtKB-SubCell"/>
</dbReference>
<dbReference type="GO" id="GO:0019871">
    <property type="term" value="F:sodium channel inhibitor activity"/>
    <property type="evidence" value="ECO:0007669"/>
    <property type="project" value="InterPro"/>
</dbReference>
<dbReference type="GO" id="GO:0090729">
    <property type="term" value="F:toxin activity"/>
    <property type="evidence" value="ECO:0007669"/>
    <property type="project" value="UniProtKB-KW"/>
</dbReference>
<dbReference type="InterPro" id="IPR012509">
    <property type="entry name" value="Neurotoxin_3_Anemonia"/>
</dbReference>
<dbReference type="InterPro" id="IPR036247">
    <property type="entry name" value="Neurotoxin_3_sf"/>
</dbReference>
<dbReference type="Pfam" id="PF08098">
    <property type="entry name" value="ATX_III"/>
    <property type="match status" value="1"/>
</dbReference>
<dbReference type="SUPFAM" id="SSF57419">
    <property type="entry name" value="Neurotoxin III (ATX III)"/>
    <property type="match status" value="1"/>
</dbReference>
<protein>
    <recommendedName>
        <fullName evidence="5">Delta-actitoxin-Avd2b 4</fullName>
        <shortName evidence="5">Delta-AITX-Avd2b 4</shortName>
    </recommendedName>
    <alternativeName>
        <fullName evidence="4">Av7</fullName>
    </alternativeName>
    <alternativeName>
        <fullName evidence="7">Neurotoxin 7</fullName>
    </alternativeName>
</protein>
<comment type="function">
    <text evidence="3">Voltage-gated sodium channel (Nav) inhibitor. 1 uM completely inhibits insect voltage-gated sodium channel inactivation (DmNav1 from D.melanogaster).</text>
</comment>
<comment type="subcellular location">
    <subcellularLocation>
        <location evidence="6">Secreted</location>
    </subcellularLocation>
    <subcellularLocation>
        <location evidence="6">Nematocyst</location>
    </subcellularLocation>
</comment>
<comment type="similarity">
    <text evidence="6">Belongs to the sea anemone short toxin (type III) family.</text>
</comment>
<comment type="caution">
    <text evidence="6">Opinions are divided on whether Anemonia viridis (Forsskal, 1775) and Anemonia sulcata (Pennant, 1777) are separate species.</text>
</comment>
<reference key="1">
    <citation type="journal article" date="2009" name="J. Mol. Evol.">
        <title>Fusion and retrotransposition events in the evolution of the sea anemone Anemonia viridis neurotoxin genes.</title>
        <authorList>
            <person name="Moran Y."/>
            <person name="Weinberger H."/>
            <person name="Lazarus N."/>
            <person name="Gur M."/>
            <person name="Kahn R."/>
            <person name="Gordon D."/>
            <person name="Gurevitz M."/>
        </authorList>
    </citation>
    <scope>NUCLEOTIDE SEQUENCE [GENOMIC DNA]</scope>
    <scope>FUNCTION</scope>
    <source>
        <tissue>Ovary</tissue>
    </source>
</reference>
<reference key="2">
    <citation type="journal article" date="2012" name="Toxicon">
        <title>Development of a rational nomenclature for naming peptide and protein toxins from sea anemones.</title>
        <authorList>
            <person name="Oliveira J.S."/>
            <person name="Fuentes-Silva D."/>
            <person name="King G.F."/>
        </authorList>
    </citation>
    <scope>NOMENCLATURE</scope>
</reference>
<name>STX74_ANEVI</name>
<evidence type="ECO:0000250" key="1">
    <source>
        <dbReference type="UniProtKB" id="P01535"/>
    </source>
</evidence>
<evidence type="ECO:0000255" key="2"/>
<evidence type="ECO:0000269" key="3">
    <source>
    </source>
</evidence>
<evidence type="ECO:0000303" key="4">
    <source>
    </source>
</evidence>
<evidence type="ECO:0000303" key="5">
    <source>
    </source>
</evidence>
<evidence type="ECO:0000305" key="6"/>
<evidence type="ECO:0000312" key="7">
    <source>
        <dbReference type="EMBL" id="ACL12304.1"/>
    </source>
</evidence>
<sequence length="71" mass="7884">MMNRLLVFLMLGAFMLVVSANDAYGDEPAFKDLNQGDESLGKRKSCCPCWLRGNCFWGQNCYPEGCSGPKV</sequence>
<organism>
    <name type="scientific">Anemonia viridis</name>
    <name type="common">Snakelocks anemone</name>
    <dbReference type="NCBI Taxonomy" id="51769"/>
    <lineage>
        <taxon>Eukaryota</taxon>
        <taxon>Metazoa</taxon>
        <taxon>Cnidaria</taxon>
        <taxon>Anthozoa</taxon>
        <taxon>Hexacorallia</taxon>
        <taxon>Actiniaria</taxon>
        <taxon>Actiniidae</taxon>
        <taxon>Anemonia</taxon>
    </lineage>
</organism>
<proteinExistence type="inferred from homology"/>
<feature type="signal peptide" evidence="2">
    <location>
        <begin position="1"/>
        <end position="20"/>
    </location>
</feature>
<feature type="propeptide" id="PRO_0000433697" evidence="1">
    <location>
        <begin position="21"/>
        <end position="41"/>
    </location>
</feature>
<feature type="peptide" id="PRO_5000461219" description="Delta-actitoxin-Avd2b 4">
    <location>
        <begin position="44"/>
        <end position="71"/>
    </location>
</feature>
<feature type="disulfide bond" evidence="1">
    <location>
        <begin position="46"/>
        <end position="61"/>
    </location>
</feature>
<feature type="disulfide bond" evidence="1">
    <location>
        <begin position="47"/>
        <end position="55"/>
    </location>
</feature>
<feature type="disulfide bond" evidence="1">
    <location>
        <begin position="49"/>
        <end position="66"/>
    </location>
</feature>